<name>QUEA_LISMF</name>
<organism>
    <name type="scientific">Listeria monocytogenes serotype 4b (strain F2365)</name>
    <dbReference type="NCBI Taxonomy" id="265669"/>
    <lineage>
        <taxon>Bacteria</taxon>
        <taxon>Bacillati</taxon>
        <taxon>Bacillota</taxon>
        <taxon>Bacilli</taxon>
        <taxon>Bacillales</taxon>
        <taxon>Listeriaceae</taxon>
        <taxon>Listeria</taxon>
    </lineage>
</organism>
<sequence>MKVEDFDFDLPEELIAQTPLLDRTSSRLMVLDKKSGDIKDQHFTDIISYLNEGDALVLNDTRVLPARLHGIKDETGAHIEVLLLKQKEGNAWETLVKPAKRIRKGATITFGDGALKAICLEELEHGGRILEFSYEGIFYEVLEQLGEMPLPPYIKEQLADQDRYQTVYGKENGSAAAPTAGLHFTEDLLAKISAKGVEIIFVTLHVGLGTFRPVDVEDTTNHKMHSEFYRLTEESAERINKIKAQGGKVVAVGTTSIRTLETIASRHDGKLVAESGWTEIFISPGYTFQAVDALITNFHLPKSTLIMLVSALSDRTKILAAYNHAVEEQYRFFSFGDAMFIH</sequence>
<gene>
    <name evidence="1" type="primary">queA</name>
    <name type="ordered locus">LMOf2365_1550</name>
</gene>
<protein>
    <recommendedName>
        <fullName evidence="1">S-adenosylmethionine:tRNA ribosyltransferase-isomerase</fullName>
        <ecNumber evidence="1">2.4.99.17</ecNumber>
    </recommendedName>
    <alternativeName>
        <fullName evidence="1">Queuosine biosynthesis protein QueA</fullName>
    </alternativeName>
</protein>
<comment type="function">
    <text evidence="1">Transfers and isomerizes the ribose moiety from AdoMet to the 7-aminomethyl group of 7-deazaguanine (preQ1-tRNA) to give epoxyqueuosine (oQ-tRNA).</text>
</comment>
<comment type="catalytic activity">
    <reaction evidence="1">
        <text>7-aminomethyl-7-carbaguanosine(34) in tRNA + S-adenosyl-L-methionine = epoxyqueuosine(34) in tRNA + adenine + L-methionine + 2 H(+)</text>
        <dbReference type="Rhea" id="RHEA:32155"/>
        <dbReference type="Rhea" id="RHEA-COMP:10342"/>
        <dbReference type="Rhea" id="RHEA-COMP:18582"/>
        <dbReference type="ChEBI" id="CHEBI:15378"/>
        <dbReference type="ChEBI" id="CHEBI:16708"/>
        <dbReference type="ChEBI" id="CHEBI:57844"/>
        <dbReference type="ChEBI" id="CHEBI:59789"/>
        <dbReference type="ChEBI" id="CHEBI:82833"/>
        <dbReference type="ChEBI" id="CHEBI:194443"/>
        <dbReference type="EC" id="2.4.99.17"/>
    </reaction>
</comment>
<comment type="pathway">
    <text evidence="1">tRNA modification; tRNA-queuosine biosynthesis.</text>
</comment>
<comment type="subunit">
    <text evidence="1">Monomer.</text>
</comment>
<comment type="subcellular location">
    <subcellularLocation>
        <location evidence="1">Cytoplasm</location>
    </subcellularLocation>
</comment>
<comment type="similarity">
    <text evidence="1">Belongs to the QueA family.</text>
</comment>
<feature type="chain" id="PRO_0000165414" description="S-adenosylmethionine:tRNA ribosyltransferase-isomerase">
    <location>
        <begin position="1"/>
        <end position="342"/>
    </location>
</feature>
<proteinExistence type="inferred from homology"/>
<keyword id="KW-0963">Cytoplasm</keyword>
<keyword id="KW-0671">Queuosine biosynthesis</keyword>
<keyword id="KW-0949">S-adenosyl-L-methionine</keyword>
<keyword id="KW-0808">Transferase</keyword>
<reference key="1">
    <citation type="journal article" date="2004" name="Nucleic Acids Res.">
        <title>Whole genome comparisons of serotype 4b and 1/2a strains of the food-borne pathogen Listeria monocytogenes reveal new insights into the core genome components of this species.</title>
        <authorList>
            <person name="Nelson K.E."/>
            <person name="Fouts D.E."/>
            <person name="Mongodin E.F."/>
            <person name="Ravel J."/>
            <person name="DeBoy R.T."/>
            <person name="Kolonay J.F."/>
            <person name="Rasko D.A."/>
            <person name="Angiuoli S.V."/>
            <person name="Gill S.R."/>
            <person name="Paulsen I.T."/>
            <person name="Peterson J.D."/>
            <person name="White O."/>
            <person name="Nelson W.C."/>
            <person name="Nierman W.C."/>
            <person name="Beanan M.J."/>
            <person name="Brinkac L.M."/>
            <person name="Daugherty S.C."/>
            <person name="Dodson R.J."/>
            <person name="Durkin A.S."/>
            <person name="Madupu R."/>
            <person name="Haft D.H."/>
            <person name="Selengut J."/>
            <person name="Van Aken S.E."/>
            <person name="Khouri H.M."/>
            <person name="Fedorova N."/>
            <person name="Forberger H.A."/>
            <person name="Tran B."/>
            <person name="Kathariou S."/>
            <person name="Wonderling L.D."/>
            <person name="Uhlich G.A."/>
            <person name="Bayles D.O."/>
            <person name="Luchansky J.B."/>
            <person name="Fraser C.M."/>
        </authorList>
    </citation>
    <scope>NUCLEOTIDE SEQUENCE [LARGE SCALE GENOMIC DNA]</scope>
    <source>
        <strain>F2365</strain>
    </source>
</reference>
<evidence type="ECO:0000255" key="1">
    <source>
        <dbReference type="HAMAP-Rule" id="MF_00113"/>
    </source>
</evidence>
<dbReference type="EC" id="2.4.99.17" evidence="1"/>
<dbReference type="EMBL" id="AE017262">
    <property type="protein sequence ID" value="AAT04325.1"/>
    <property type="molecule type" value="Genomic_DNA"/>
</dbReference>
<dbReference type="RefSeq" id="WP_010958909.1">
    <property type="nucleotide sequence ID" value="NC_002973.6"/>
</dbReference>
<dbReference type="SMR" id="Q71ZD9"/>
<dbReference type="KEGG" id="lmf:LMOf2365_1550"/>
<dbReference type="HOGENOM" id="CLU_039110_1_0_9"/>
<dbReference type="UniPathway" id="UPA00392"/>
<dbReference type="GO" id="GO:0005737">
    <property type="term" value="C:cytoplasm"/>
    <property type="evidence" value="ECO:0007669"/>
    <property type="project" value="UniProtKB-SubCell"/>
</dbReference>
<dbReference type="GO" id="GO:0051075">
    <property type="term" value="F:S-adenosylmethionine:tRNA ribosyltransferase-isomerase activity"/>
    <property type="evidence" value="ECO:0007669"/>
    <property type="project" value="UniProtKB-EC"/>
</dbReference>
<dbReference type="GO" id="GO:0008616">
    <property type="term" value="P:queuosine biosynthetic process"/>
    <property type="evidence" value="ECO:0007669"/>
    <property type="project" value="UniProtKB-UniRule"/>
</dbReference>
<dbReference type="GO" id="GO:0002099">
    <property type="term" value="P:tRNA wobble guanine modification"/>
    <property type="evidence" value="ECO:0007669"/>
    <property type="project" value="TreeGrafter"/>
</dbReference>
<dbReference type="FunFam" id="2.40.10.240:FF:000002">
    <property type="entry name" value="S-adenosylmethionine:tRNA ribosyltransferase-isomerase"/>
    <property type="match status" value="1"/>
</dbReference>
<dbReference type="FunFam" id="3.40.1780.10:FF:000001">
    <property type="entry name" value="S-adenosylmethionine:tRNA ribosyltransferase-isomerase"/>
    <property type="match status" value="1"/>
</dbReference>
<dbReference type="Gene3D" id="2.40.10.240">
    <property type="entry name" value="QueA-like"/>
    <property type="match status" value="1"/>
</dbReference>
<dbReference type="Gene3D" id="3.40.1780.10">
    <property type="entry name" value="QueA-like"/>
    <property type="match status" value="1"/>
</dbReference>
<dbReference type="HAMAP" id="MF_00113">
    <property type="entry name" value="QueA"/>
    <property type="match status" value="1"/>
</dbReference>
<dbReference type="InterPro" id="IPR003699">
    <property type="entry name" value="QueA"/>
</dbReference>
<dbReference type="InterPro" id="IPR042118">
    <property type="entry name" value="QueA_dom1"/>
</dbReference>
<dbReference type="InterPro" id="IPR042119">
    <property type="entry name" value="QueA_dom2"/>
</dbReference>
<dbReference type="InterPro" id="IPR036100">
    <property type="entry name" value="QueA_sf"/>
</dbReference>
<dbReference type="NCBIfam" id="NF001140">
    <property type="entry name" value="PRK00147.1"/>
    <property type="match status" value="1"/>
</dbReference>
<dbReference type="NCBIfam" id="TIGR00113">
    <property type="entry name" value="queA"/>
    <property type="match status" value="1"/>
</dbReference>
<dbReference type="PANTHER" id="PTHR30307">
    <property type="entry name" value="S-ADENOSYLMETHIONINE:TRNA RIBOSYLTRANSFERASE-ISOMERASE"/>
    <property type="match status" value="1"/>
</dbReference>
<dbReference type="PANTHER" id="PTHR30307:SF0">
    <property type="entry name" value="S-ADENOSYLMETHIONINE:TRNA RIBOSYLTRANSFERASE-ISOMERASE"/>
    <property type="match status" value="1"/>
</dbReference>
<dbReference type="Pfam" id="PF02547">
    <property type="entry name" value="Queuosine_synth"/>
    <property type="match status" value="1"/>
</dbReference>
<dbReference type="SUPFAM" id="SSF111337">
    <property type="entry name" value="QueA-like"/>
    <property type="match status" value="1"/>
</dbReference>
<accession>Q71ZD9</accession>